<dbReference type="EMBL" id="AE017197">
    <property type="protein sequence ID" value="AAU04094.1"/>
    <property type="molecule type" value="Genomic_DNA"/>
</dbReference>
<dbReference type="RefSeq" id="WP_011191073.1">
    <property type="nucleotide sequence ID" value="NC_006142.1"/>
</dbReference>
<dbReference type="SMR" id="Q68W98"/>
<dbReference type="KEGG" id="rty:RT0631"/>
<dbReference type="eggNOG" id="COG0201">
    <property type="taxonomic scope" value="Bacteria"/>
</dbReference>
<dbReference type="HOGENOM" id="CLU_030313_0_2_5"/>
<dbReference type="OrthoDB" id="9809248at2"/>
<dbReference type="Proteomes" id="UP000000604">
    <property type="component" value="Chromosome"/>
</dbReference>
<dbReference type="GO" id="GO:0005886">
    <property type="term" value="C:plasma membrane"/>
    <property type="evidence" value="ECO:0007669"/>
    <property type="project" value="UniProtKB-SubCell"/>
</dbReference>
<dbReference type="GO" id="GO:0065002">
    <property type="term" value="P:intracellular protein transmembrane transport"/>
    <property type="evidence" value="ECO:0007669"/>
    <property type="project" value="UniProtKB-UniRule"/>
</dbReference>
<dbReference type="GO" id="GO:0006605">
    <property type="term" value="P:protein targeting"/>
    <property type="evidence" value="ECO:0007669"/>
    <property type="project" value="UniProtKB-UniRule"/>
</dbReference>
<dbReference type="GO" id="GO:0043952">
    <property type="term" value="P:protein transport by the Sec complex"/>
    <property type="evidence" value="ECO:0007669"/>
    <property type="project" value="UniProtKB-UniRule"/>
</dbReference>
<dbReference type="FunFam" id="1.10.3370.10:FF:000001">
    <property type="entry name" value="Preprotein translocase subunit SecY"/>
    <property type="match status" value="1"/>
</dbReference>
<dbReference type="Gene3D" id="1.10.3370.10">
    <property type="entry name" value="SecY subunit domain"/>
    <property type="match status" value="1"/>
</dbReference>
<dbReference type="HAMAP" id="MF_01465">
    <property type="entry name" value="SecY"/>
    <property type="match status" value="1"/>
</dbReference>
<dbReference type="InterPro" id="IPR026593">
    <property type="entry name" value="SecY"/>
</dbReference>
<dbReference type="InterPro" id="IPR002208">
    <property type="entry name" value="SecY/SEC61-alpha"/>
</dbReference>
<dbReference type="InterPro" id="IPR030659">
    <property type="entry name" value="SecY_CS"/>
</dbReference>
<dbReference type="InterPro" id="IPR023201">
    <property type="entry name" value="SecY_dom_sf"/>
</dbReference>
<dbReference type="NCBIfam" id="TIGR00967">
    <property type="entry name" value="3a0501s007"/>
    <property type="match status" value="1"/>
</dbReference>
<dbReference type="PANTHER" id="PTHR10906">
    <property type="entry name" value="SECY/SEC61-ALPHA FAMILY MEMBER"/>
    <property type="match status" value="1"/>
</dbReference>
<dbReference type="Pfam" id="PF00344">
    <property type="entry name" value="SecY"/>
    <property type="match status" value="1"/>
</dbReference>
<dbReference type="PIRSF" id="PIRSF004557">
    <property type="entry name" value="SecY"/>
    <property type="match status" value="1"/>
</dbReference>
<dbReference type="PRINTS" id="PR00303">
    <property type="entry name" value="SECYTRNLCASE"/>
</dbReference>
<dbReference type="SUPFAM" id="SSF103491">
    <property type="entry name" value="Preprotein translocase SecY subunit"/>
    <property type="match status" value="1"/>
</dbReference>
<dbReference type="PROSITE" id="PS00755">
    <property type="entry name" value="SECY_1"/>
    <property type="match status" value="1"/>
</dbReference>
<dbReference type="PROSITE" id="PS00756">
    <property type="entry name" value="SECY_2"/>
    <property type="match status" value="1"/>
</dbReference>
<feature type="chain" id="PRO_0000277282" description="Protein translocase subunit SecY">
    <location>
        <begin position="1"/>
        <end position="433"/>
    </location>
</feature>
<feature type="transmembrane region" description="Helical" evidence="1">
    <location>
        <begin position="17"/>
        <end position="37"/>
    </location>
</feature>
<feature type="transmembrane region" description="Helical" evidence="1">
    <location>
        <begin position="71"/>
        <end position="91"/>
    </location>
</feature>
<feature type="transmembrane region" description="Helical" evidence="1">
    <location>
        <begin position="117"/>
        <end position="137"/>
    </location>
</feature>
<feature type="transmembrane region" description="Helical" evidence="1">
    <location>
        <begin position="141"/>
        <end position="161"/>
    </location>
</feature>
<feature type="transmembrane region" description="Helical" evidence="1">
    <location>
        <begin position="184"/>
        <end position="204"/>
    </location>
</feature>
<feature type="transmembrane region" description="Helical" evidence="1">
    <location>
        <begin position="212"/>
        <end position="232"/>
    </location>
</feature>
<feature type="transmembrane region" description="Helical" evidence="1">
    <location>
        <begin position="268"/>
        <end position="288"/>
    </location>
</feature>
<feature type="transmembrane region" description="Helical" evidence="1">
    <location>
        <begin position="310"/>
        <end position="330"/>
    </location>
</feature>
<feature type="transmembrane region" description="Helical" evidence="1">
    <location>
        <begin position="366"/>
        <end position="386"/>
    </location>
</feature>
<feature type="transmembrane region" description="Helical" evidence="1">
    <location>
        <begin position="388"/>
        <end position="408"/>
    </location>
</feature>
<comment type="function">
    <text evidence="1">The central subunit of the protein translocation channel SecYEG. Consists of two halves formed by TMs 1-5 and 6-10. These two domains form a lateral gate at the front which open onto the bilayer between TMs 2 and 7, and are clamped together by SecE at the back. The channel is closed by both a pore ring composed of hydrophobic SecY resides and a short helix (helix 2A) on the extracellular side of the membrane which forms a plug. The plug probably moves laterally to allow the channel to open. The ring and the pore may move independently.</text>
</comment>
<comment type="subunit">
    <text evidence="1">Component of the Sec protein translocase complex. Heterotrimer consisting of SecY, SecE and SecG subunits. The heterotrimers can form oligomers, although 1 heterotrimer is thought to be able to translocate proteins. Interacts with the ribosome. Interacts with SecDF, and other proteins may be involved. Interacts with SecA.</text>
</comment>
<comment type="subcellular location">
    <subcellularLocation>
        <location evidence="1">Cell inner membrane</location>
        <topology evidence="1">Multi-pass membrane protein</topology>
    </subcellularLocation>
</comment>
<comment type="similarity">
    <text evidence="1">Belongs to the SecY/SEC61-alpha family.</text>
</comment>
<gene>
    <name evidence="1" type="primary">secY</name>
    <name type="ordered locus">RT0631</name>
</gene>
<protein>
    <recommendedName>
        <fullName evidence="1">Protein translocase subunit SecY</fullName>
    </recommendedName>
</protein>
<accession>Q68W98</accession>
<keyword id="KW-0997">Cell inner membrane</keyword>
<keyword id="KW-1003">Cell membrane</keyword>
<keyword id="KW-0472">Membrane</keyword>
<keyword id="KW-0653">Protein transport</keyword>
<keyword id="KW-0811">Translocation</keyword>
<keyword id="KW-0812">Transmembrane</keyword>
<keyword id="KW-1133">Transmembrane helix</keyword>
<keyword id="KW-0813">Transport</keyword>
<sequence>MGQNFSKKSSNDLVSRIIFTIFMLIICRIGSFIPIPGIDSIALNSVAEKNQFGILGMFNMLSGGSLGRMSIFALAIMPYITASIIIQLMSVAYKPLENLKKEGESGKRKINQLSRYLTVLLASFQAYGVALSLESMVTNTGPVVILAGFFFRVTTVITLVVGTMLLMWLGEQITQRGIGNGTSLIIFIGIISGVPSAIISMFELSRKGALSPLIAITVCIGVVLLIAIIIFFEKAQRKLLVQYPKRQVGNKIYGGEATHMPLKLNTSGVIPPIFASSILLFPTTLANFSNSNSETMSMLSYYLGHGKPVYILLYVVLIMFFSFFYTAIVFNSEETANNLRKYGAYIPGKRPGKNTSDYFDYILTRLTVIGGLYLSIICVIPELLMNKYVISLSLGGTSFLIVVNVVLDTMTQIQTYLFSSKYEGLMKKIKLKN</sequence>
<organism>
    <name type="scientific">Rickettsia typhi (strain ATCC VR-144 / Wilmington)</name>
    <dbReference type="NCBI Taxonomy" id="257363"/>
    <lineage>
        <taxon>Bacteria</taxon>
        <taxon>Pseudomonadati</taxon>
        <taxon>Pseudomonadota</taxon>
        <taxon>Alphaproteobacteria</taxon>
        <taxon>Rickettsiales</taxon>
        <taxon>Rickettsiaceae</taxon>
        <taxon>Rickettsieae</taxon>
        <taxon>Rickettsia</taxon>
        <taxon>typhus group</taxon>
    </lineage>
</organism>
<proteinExistence type="inferred from homology"/>
<reference key="1">
    <citation type="journal article" date="2004" name="J. Bacteriol.">
        <title>Complete genome sequence of Rickettsia typhi and comparison with sequences of other Rickettsiae.</title>
        <authorList>
            <person name="McLeod M.P."/>
            <person name="Qin X."/>
            <person name="Karpathy S.E."/>
            <person name="Gioia J."/>
            <person name="Highlander S.K."/>
            <person name="Fox G.E."/>
            <person name="McNeill T.Z."/>
            <person name="Jiang H."/>
            <person name="Muzny D."/>
            <person name="Jacob L.S."/>
            <person name="Hawes A.C."/>
            <person name="Sodergren E."/>
            <person name="Gill R."/>
            <person name="Hume J."/>
            <person name="Morgan M."/>
            <person name="Fan G."/>
            <person name="Amin A.G."/>
            <person name="Gibbs R.A."/>
            <person name="Hong C."/>
            <person name="Yu X.-J."/>
            <person name="Walker D.H."/>
            <person name="Weinstock G.M."/>
        </authorList>
    </citation>
    <scope>NUCLEOTIDE SEQUENCE [LARGE SCALE GENOMIC DNA]</scope>
    <source>
        <strain>ATCC VR-144 / Wilmington</strain>
    </source>
</reference>
<name>SECY_RICTY</name>
<evidence type="ECO:0000255" key="1">
    <source>
        <dbReference type="HAMAP-Rule" id="MF_01465"/>
    </source>
</evidence>